<proteinExistence type="inferred from homology"/>
<feature type="chain" id="PRO_0000232977" description="Peptidyl-prolyl cis-trans isomerase-like 4">
    <location>
        <begin position="1"/>
        <end position="461"/>
    </location>
</feature>
<feature type="domain" description="PPIase cyclophilin-type" evidence="2">
    <location>
        <begin position="1"/>
        <end position="171"/>
    </location>
</feature>
<feature type="domain" description="RRM" evidence="3">
    <location>
        <begin position="248"/>
        <end position="326"/>
    </location>
</feature>
<feature type="region of interest" description="Disordered" evidence="4">
    <location>
        <begin position="372"/>
        <end position="461"/>
    </location>
</feature>
<feature type="compositionally biased region" description="Basic and acidic residues" evidence="4">
    <location>
        <begin position="378"/>
        <end position="392"/>
    </location>
</feature>
<feature type="compositionally biased region" description="Basic and acidic residues" evidence="4">
    <location>
        <begin position="400"/>
        <end position="461"/>
    </location>
</feature>
<evidence type="ECO:0000250" key="1"/>
<evidence type="ECO:0000255" key="2">
    <source>
        <dbReference type="PROSITE-ProRule" id="PRU00156"/>
    </source>
</evidence>
<evidence type="ECO:0000255" key="3">
    <source>
        <dbReference type="PROSITE-ProRule" id="PRU00176"/>
    </source>
</evidence>
<evidence type="ECO:0000256" key="4">
    <source>
        <dbReference type="SAM" id="MobiDB-lite"/>
    </source>
</evidence>
<evidence type="ECO:0000305" key="5"/>
<keyword id="KW-0413">Isomerase</keyword>
<keyword id="KW-0539">Nucleus</keyword>
<keyword id="KW-1185">Reference proteome</keyword>
<keyword id="KW-0694">RNA-binding</keyword>
<keyword id="KW-0697">Rotamase</keyword>
<reference key="1">
    <citation type="journal article" date="2005" name="Nature">
        <title>Sequencing of Aspergillus nidulans and comparative analysis with A. fumigatus and A. oryzae.</title>
        <authorList>
            <person name="Galagan J.E."/>
            <person name="Calvo S.E."/>
            <person name="Cuomo C."/>
            <person name="Ma L.-J."/>
            <person name="Wortman J.R."/>
            <person name="Batzoglou S."/>
            <person name="Lee S.-I."/>
            <person name="Bastuerkmen M."/>
            <person name="Spevak C.C."/>
            <person name="Clutterbuck J."/>
            <person name="Kapitonov V."/>
            <person name="Jurka J."/>
            <person name="Scazzocchio C."/>
            <person name="Farman M.L."/>
            <person name="Butler J."/>
            <person name="Purcell S."/>
            <person name="Harris S."/>
            <person name="Braus G.H."/>
            <person name="Draht O."/>
            <person name="Busch S."/>
            <person name="D'Enfert C."/>
            <person name="Bouchier C."/>
            <person name="Goldman G.H."/>
            <person name="Bell-Pedersen D."/>
            <person name="Griffiths-Jones S."/>
            <person name="Doonan J.H."/>
            <person name="Yu J."/>
            <person name="Vienken K."/>
            <person name="Pain A."/>
            <person name="Freitag M."/>
            <person name="Selker E.U."/>
            <person name="Archer D.B."/>
            <person name="Penalva M.A."/>
            <person name="Oakley B.R."/>
            <person name="Momany M."/>
            <person name="Tanaka T."/>
            <person name="Kumagai T."/>
            <person name="Asai K."/>
            <person name="Machida M."/>
            <person name="Nierman W.C."/>
            <person name="Denning D.W."/>
            <person name="Caddick M.X."/>
            <person name="Hynes M."/>
            <person name="Paoletti M."/>
            <person name="Fischer R."/>
            <person name="Miller B.L."/>
            <person name="Dyer P.S."/>
            <person name="Sachs M.S."/>
            <person name="Osmani S.A."/>
            <person name="Birren B.W."/>
        </authorList>
    </citation>
    <scope>NUCLEOTIDE SEQUENCE [LARGE SCALE GENOMIC DNA]</scope>
    <source>
        <strain>FGSC A4 / ATCC 38163 / CBS 112.46 / NRRL 194 / M139</strain>
    </source>
</reference>
<reference key="2">
    <citation type="journal article" date="2009" name="Fungal Genet. Biol.">
        <title>The 2008 update of the Aspergillus nidulans genome annotation: a community effort.</title>
        <authorList>
            <person name="Wortman J.R."/>
            <person name="Gilsenan J.M."/>
            <person name="Joardar V."/>
            <person name="Deegan J."/>
            <person name="Clutterbuck J."/>
            <person name="Andersen M.R."/>
            <person name="Archer D."/>
            <person name="Bencina M."/>
            <person name="Braus G."/>
            <person name="Coutinho P."/>
            <person name="von Dohren H."/>
            <person name="Doonan J."/>
            <person name="Driessen A.J."/>
            <person name="Durek P."/>
            <person name="Espeso E."/>
            <person name="Fekete E."/>
            <person name="Flipphi M."/>
            <person name="Estrada C.G."/>
            <person name="Geysens S."/>
            <person name="Goldman G."/>
            <person name="de Groot P.W."/>
            <person name="Hansen K."/>
            <person name="Harris S.D."/>
            <person name="Heinekamp T."/>
            <person name="Helmstaedt K."/>
            <person name="Henrissat B."/>
            <person name="Hofmann G."/>
            <person name="Homan T."/>
            <person name="Horio T."/>
            <person name="Horiuchi H."/>
            <person name="James S."/>
            <person name="Jones M."/>
            <person name="Karaffa L."/>
            <person name="Karanyi Z."/>
            <person name="Kato M."/>
            <person name="Keller N."/>
            <person name="Kelly D.E."/>
            <person name="Kiel J.A."/>
            <person name="Kim J.M."/>
            <person name="van der Klei I.J."/>
            <person name="Klis F.M."/>
            <person name="Kovalchuk A."/>
            <person name="Krasevec N."/>
            <person name="Kubicek C.P."/>
            <person name="Liu B."/>
            <person name="Maccabe A."/>
            <person name="Meyer V."/>
            <person name="Mirabito P."/>
            <person name="Miskei M."/>
            <person name="Mos M."/>
            <person name="Mullins J."/>
            <person name="Nelson D.R."/>
            <person name="Nielsen J."/>
            <person name="Oakley B.R."/>
            <person name="Osmani S.A."/>
            <person name="Pakula T."/>
            <person name="Paszewski A."/>
            <person name="Paulsen I."/>
            <person name="Pilsyk S."/>
            <person name="Pocsi I."/>
            <person name="Punt P.J."/>
            <person name="Ram A.F."/>
            <person name="Ren Q."/>
            <person name="Robellet X."/>
            <person name="Robson G."/>
            <person name="Seiboth B."/>
            <person name="van Solingen P."/>
            <person name="Specht T."/>
            <person name="Sun J."/>
            <person name="Taheri-Talesh N."/>
            <person name="Takeshita N."/>
            <person name="Ussery D."/>
            <person name="vanKuyk P.A."/>
            <person name="Visser H."/>
            <person name="van de Vondervoort P.J."/>
            <person name="de Vries R.P."/>
            <person name="Walton J."/>
            <person name="Xiang X."/>
            <person name="Xiong Y."/>
            <person name="Zeng A.P."/>
            <person name="Brandt B.W."/>
            <person name="Cornell M.J."/>
            <person name="van den Hondel C.A."/>
            <person name="Visser J."/>
            <person name="Oliver S.G."/>
            <person name="Turner G."/>
        </authorList>
    </citation>
    <scope>GENOME REANNOTATION</scope>
    <source>
        <strain>FGSC A4 / ATCC 38163 / CBS 112.46 / NRRL 194 / M139</strain>
    </source>
</reference>
<gene>
    <name type="primary">cyp6</name>
    <name type="ORF">AN9095</name>
</gene>
<sequence>MSVLLETSLGDIVIDLLVDESPKACENFLKLCKVKYYNFSPFYSVQKNFSFQTGDPIGPDSPDSNGGSSIWGLLEGPSKQAVPLALPPKLKHDEKGTVSMAAVPSPHDPDLRLVTSQFIVTLGDNLDYLDGKAVIFGKVVEGFDVLEKVNEAFIDDRGRPLKDIRIRHTVILDDPFDDPPGLVEPPESPLPTKAQLATVRIADDEDLGDDMDEASMEKLRREREARAQALTLEMVGDLPFAEVKPPENVLFVCKLNPVTQDEDLELIFSRFGKILSCEVIRDKRTGDSLQYAFIEFESQKDCEQAYFKMQGVLIDDHRIHVDFSQSVSKLSESWRDATVKKRSAQRGGFGGVAGLEKKRQYRASENARERANYNMVFDKNDNRRSAPRERSYSRSPQRNNYRDRRDSRSPRRDSYRSRYGDRSNSRSPPLRDRDRIRTDYYDNDRRRGYRDDDRYRDRRRR</sequence>
<protein>
    <recommendedName>
        <fullName>Peptidyl-prolyl cis-trans isomerase-like 4</fullName>
        <shortName>PPIase</shortName>
        <ecNumber>5.2.1.8</ecNumber>
    </recommendedName>
    <alternativeName>
        <fullName>Rotamase</fullName>
    </alternativeName>
</protein>
<accession>Q5ARI5</accession>
<accession>C8VH51</accession>
<dbReference type="EC" id="5.2.1.8"/>
<dbReference type="EMBL" id="AACD01000169">
    <property type="protein sequence ID" value="EAA61928.1"/>
    <property type="molecule type" value="Genomic_DNA"/>
</dbReference>
<dbReference type="EMBL" id="BN001306">
    <property type="protein sequence ID" value="CBF82562.1"/>
    <property type="molecule type" value="Genomic_DNA"/>
</dbReference>
<dbReference type="RefSeq" id="XP_682364.1">
    <property type="nucleotide sequence ID" value="XM_677272.1"/>
</dbReference>
<dbReference type="SMR" id="Q5ARI5"/>
<dbReference type="STRING" id="227321.Q5ARI5"/>
<dbReference type="EnsemblFungi" id="CBF82562">
    <property type="protein sequence ID" value="CBF82562"/>
    <property type="gene ID" value="ANIA_09095"/>
</dbReference>
<dbReference type="KEGG" id="ani:ANIA_09095"/>
<dbReference type="VEuPathDB" id="FungiDB:AN9095"/>
<dbReference type="eggNOG" id="KOG0415">
    <property type="taxonomic scope" value="Eukaryota"/>
</dbReference>
<dbReference type="HOGENOM" id="CLU_018791_2_1_1"/>
<dbReference type="InParanoid" id="Q5ARI5"/>
<dbReference type="OMA" id="APKCCEN"/>
<dbReference type="OrthoDB" id="2083at2759"/>
<dbReference type="Proteomes" id="UP000000560">
    <property type="component" value="Chromosome VI"/>
</dbReference>
<dbReference type="GO" id="GO:0005634">
    <property type="term" value="C:nucleus"/>
    <property type="evidence" value="ECO:0000318"/>
    <property type="project" value="GO_Central"/>
</dbReference>
<dbReference type="GO" id="GO:0003755">
    <property type="term" value="F:peptidyl-prolyl cis-trans isomerase activity"/>
    <property type="evidence" value="ECO:0007669"/>
    <property type="project" value="UniProtKB-KW"/>
</dbReference>
<dbReference type="GO" id="GO:0003723">
    <property type="term" value="F:RNA binding"/>
    <property type="evidence" value="ECO:0007669"/>
    <property type="project" value="UniProtKB-KW"/>
</dbReference>
<dbReference type="CDD" id="cd01921">
    <property type="entry name" value="cyclophilin_RRM"/>
    <property type="match status" value="1"/>
</dbReference>
<dbReference type="CDD" id="cd12235">
    <property type="entry name" value="RRM_PPIL4"/>
    <property type="match status" value="1"/>
</dbReference>
<dbReference type="FunFam" id="2.40.100.10:FF:000015">
    <property type="entry name" value="Peptidyl-prolyl cis-trans isomerase"/>
    <property type="match status" value="1"/>
</dbReference>
<dbReference type="FunFam" id="3.30.70.330:FF:000377">
    <property type="entry name" value="Peptidyl-prolyl cis-trans isomerase"/>
    <property type="match status" value="1"/>
</dbReference>
<dbReference type="Gene3D" id="3.30.70.330">
    <property type="match status" value="1"/>
</dbReference>
<dbReference type="Gene3D" id="2.40.100.10">
    <property type="entry name" value="Cyclophilin-like"/>
    <property type="match status" value="1"/>
</dbReference>
<dbReference type="InterPro" id="IPR035542">
    <property type="entry name" value="CRIP"/>
</dbReference>
<dbReference type="InterPro" id="IPR029000">
    <property type="entry name" value="Cyclophilin-like_dom_sf"/>
</dbReference>
<dbReference type="InterPro" id="IPR002130">
    <property type="entry name" value="Cyclophilin-type_PPIase_dom"/>
</dbReference>
<dbReference type="InterPro" id="IPR035538">
    <property type="entry name" value="Cyclophilin_PPIL4"/>
</dbReference>
<dbReference type="InterPro" id="IPR012677">
    <property type="entry name" value="Nucleotide-bd_a/b_plait_sf"/>
</dbReference>
<dbReference type="InterPro" id="IPR035979">
    <property type="entry name" value="RBD_domain_sf"/>
</dbReference>
<dbReference type="InterPro" id="IPR000504">
    <property type="entry name" value="RRM_dom"/>
</dbReference>
<dbReference type="PANTHER" id="PTHR45843">
    <property type="entry name" value="PEPTIDYL-PROLYL CIS-TRANS ISOMERASE-LIKE 4"/>
    <property type="match status" value="1"/>
</dbReference>
<dbReference type="PANTHER" id="PTHR45843:SF1">
    <property type="entry name" value="PEPTIDYL-PROLYL CIS-TRANS ISOMERASE-LIKE 4"/>
    <property type="match status" value="1"/>
</dbReference>
<dbReference type="Pfam" id="PF00160">
    <property type="entry name" value="Pro_isomerase"/>
    <property type="match status" value="1"/>
</dbReference>
<dbReference type="Pfam" id="PF00076">
    <property type="entry name" value="RRM_1"/>
    <property type="match status" value="1"/>
</dbReference>
<dbReference type="PRINTS" id="PR00153">
    <property type="entry name" value="CSAPPISMRASE"/>
</dbReference>
<dbReference type="SMART" id="SM00360">
    <property type="entry name" value="RRM"/>
    <property type="match status" value="1"/>
</dbReference>
<dbReference type="SUPFAM" id="SSF50891">
    <property type="entry name" value="Cyclophilin-like"/>
    <property type="match status" value="1"/>
</dbReference>
<dbReference type="SUPFAM" id="SSF54928">
    <property type="entry name" value="RNA-binding domain, RBD"/>
    <property type="match status" value="1"/>
</dbReference>
<dbReference type="PROSITE" id="PS50072">
    <property type="entry name" value="CSA_PPIASE_2"/>
    <property type="match status" value="1"/>
</dbReference>
<dbReference type="PROSITE" id="PS50102">
    <property type="entry name" value="RRM"/>
    <property type="match status" value="1"/>
</dbReference>
<organism>
    <name type="scientific">Emericella nidulans (strain FGSC A4 / ATCC 38163 / CBS 112.46 / NRRL 194 / M139)</name>
    <name type="common">Aspergillus nidulans</name>
    <dbReference type="NCBI Taxonomy" id="227321"/>
    <lineage>
        <taxon>Eukaryota</taxon>
        <taxon>Fungi</taxon>
        <taxon>Dikarya</taxon>
        <taxon>Ascomycota</taxon>
        <taxon>Pezizomycotina</taxon>
        <taxon>Eurotiomycetes</taxon>
        <taxon>Eurotiomycetidae</taxon>
        <taxon>Eurotiales</taxon>
        <taxon>Aspergillaceae</taxon>
        <taxon>Aspergillus</taxon>
        <taxon>Aspergillus subgen. Nidulantes</taxon>
    </lineage>
</organism>
<comment type="function">
    <text evidence="1">PPIases accelerate the folding of proteins. It catalyzes the cis-trans isomerization of proline imidic peptide bonds in oligopeptides (By similarity).</text>
</comment>
<comment type="catalytic activity">
    <reaction>
        <text>[protein]-peptidylproline (omega=180) = [protein]-peptidylproline (omega=0)</text>
        <dbReference type="Rhea" id="RHEA:16237"/>
        <dbReference type="Rhea" id="RHEA-COMP:10747"/>
        <dbReference type="Rhea" id="RHEA-COMP:10748"/>
        <dbReference type="ChEBI" id="CHEBI:83833"/>
        <dbReference type="ChEBI" id="CHEBI:83834"/>
        <dbReference type="EC" id="5.2.1.8"/>
    </reaction>
</comment>
<comment type="subcellular location">
    <subcellularLocation>
        <location evidence="1">Nucleus</location>
    </subcellularLocation>
</comment>
<comment type="similarity">
    <text evidence="5">Belongs to the cyclophilin-type PPIase family. PPIL4 subfamily.</text>
</comment>
<name>PPIL4_EMENI</name>